<proteinExistence type="inferred from homology"/>
<geneLocation type="mitochondrion"/>
<keyword id="KW-0249">Electron transport</keyword>
<keyword id="KW-0349">Heme</keyword>
<keyword id="KW-0408">Iron</keyword>
<keyword id="KW-0472">Membrane</keyword>
<keyword id="KW-0479">Metal-binding</keyword>
<keyword id="KW-0496">Mitochondrion</keyword>
<keyword id="KW-0999">Mitochondrion inner membrane</keyword>
<keyword id="KW-0679">Respiratory chain</keyword>
<keyword id="KW-0812">Transmembrane</keyword>
<keyword id="KW-1133">Transmembrane helix</keyword>
<keyword id="KW-0813">Transport</keyword>
<keyword id="KW-0830">Ubiquinone</keyword>
<comment type="function">
    <text evidence="2">Component of the ubiquinol-cytochrome c reductase complex (complex III or cytochrome b-c1 complex) that is part of the mitochondrial respiratory chain. The b-c1 complex mediates electron transfer from ubiquinol to cytochrome c. Contributes to the generation of a proton gradient across the mitochondrial membrane that is then used for ATP synthesis.</text>
</comment>
<comment type="cofactor">
    <cofactor evidence="2">
        <name>heme b</name>
        <dbReference type="ChEBI" id="CHEBI:60344"/>
    </cofactor>
    <text evidence="2">Binds 2 heme b groups non-covalently.</text>
</comment>
<comment type="subunit">
    <text evidence="2">The cytochrome bc1 complex contains 11 subunits: 3 respiratory subunits (MT-CYB, CYC1 and UQCRFS1), 2 core proteins (UQCRC1 and UQCRC2) and 6 low-molecular weight proteins (UQCRH/QCR6, UQCRB/QCR7, UQCRQ/QCR8, UQCR10/QCR9, UQCR11/QCR10 and a cleavage product of UQCRFS1). This cytochrome bc1 complex then forms a dimer.</text>
</comment>
<comment type="subcellular location">
    <subcellularLocation>
        <location evidence="2">Mitochondrion inner membrane</location>
        <topology evidence="2">Multi-pass membrane protein</topology>
    </subcellularLocation>
</comment>
<comment type="miscellaneous">
    <text evidence="1">Heme 1 (or BL or b562) is low-potential and absorbs at about 562 nm, and heme 2 (or BH or b566) is high-potential and absorbs at about 566 nm.</text>
</comment>
<comment type="similarity">
    <text evidence="3 4">Belongs to the cytochrome b family.</text>
</comment>
<comment type="caution">
    <text evidence="2">The full-length protein contains only eight transmembrane helices, not nine as predicted by bioinformatics tools.</text>
</comment>
<dbReference type="EMBL" id="U11061">
    <property type="protein sequence ID" value="AAA73980.1"/>
    <property type="molecule type" value="Genomic_DNA"/>
</dbReference>
<dbReference type="SMR" id="Q34534"/>
<dbReference type="GO" id="GO:0005743">
    <property type="term" value="C:mitochondrial inner membrane"/>
    <property type="evidence" value="ECO:0007669"/>
    <property type="project" value="UniProtKB-SubCell"/>
</dbReference>
<dbReference type="GO" id="GO:0045275">
    <property type="term" value="C:respiratory chain complex III"/>
    <property type="evidence" value="ECO:0007669"/>
    <property type="project" value="InterPro"/>
</dbReference>
<dbReference type="GO" id="GO:0046872">
    <property type="term" value="F:metal ion binding"/>
    <property type="evidence" value="ECO:0007669"/>
    <property type="project" value="UniProtKB-KW"/>
</dbReference>
<dbReference type="GO" id="GO:0008121">
    <property type="term" value="F:ubiquinol-cytochrome-c reductase activity"/>
    <property type="evidence" value="ECO:0007669"/>
    <property type="project" value="InterPro"/>
</dbReference>
<dbReference type="GO" id="GO:0006122">
    <property type="term" value="P:mitochondrial electron transport, ubiquinol to cytochrome c"/>
    <property type="evidence" value="ECO:0007669"/>
    <property type="project" value="TreeGrafter"/>
</dbReference>
<dbReference type="CDD" id="cd00290">
    <property type="entry name" value="cytochrome_b_C"/>
    <property type="match status" value="1"/>
</dbReference>
<dbReference type="CDD" id="cd00284">
    <property type="entry name" value="Cytochrome_b_N"/>
    <property type="match status" value="1"/>
</dbReference>
<dbReference type="FunFam" id="1.20.810.10:FF:000002">
    <property type="entry name" value="Cytochrome b"/>
    <property type="match status" value="1"/>
</dbReference>
<dbReference type="Gene3D" id="1.20.810.10">
    <property type="entry name" value="Cytochrome Bc1 Complex, Chain C"/>
    <property type="match status" value="1"/>
</dbReference>
<dbReference type="InterPro" id="IPR005798">
    <property type="entry name" value="Cyt_b/b6_C"/>
</dbReference>
<dbReference type="InterPro" id="IPR036150">
    <property type="entry name" value="Cyt_b/b6_C_sf"/>
</dbReference>
<dbReference type="InterPro" id="IPR005797">
    <property type="entry name" value="Cyt_b/b6_N"/>
</dbReference>
<dbReference type="InterPro" id="IPR027387">
    <property type="entry name" value="Cytb/b6-like_sf"/>
</dbReference>
<dbReference type="InterPro" id="IPR030689">
    <property type="entry name" value="Cytochrome_b"/>
</dbReference>
<dbReference type="InterPro" id="IPR048260">
    <property type="entry name" value="Cytochrome_b_C_euk/bac"/>
</dbReference>
<dbReference type="InterPro" id="IPR048259">
    <property type="entry name" value="Cytochrome_b_N_euk/bac"/>
</dbReference>
<dbReference type="InterPro" id="IPR016174">
    <property type="entry name" value="Di-haem_cyt_TM"/>
</dbReference>
<dbReference type="PANTHER" id="PTHR19271">
    <property type="entry name" value="CYTOCHROME B"/>
    <property type="match status" value="1"/>
</dbReference>
<dbReference type="PANTHER" id="PTHR19271:SF16">
    <property type="entry name" value="CYTOCHROME B"/>
    <property type="match status" value="1"/>
</dbReference>
<dbReference type="Pfam" id="PF00032">
    <property type="entry name" value="Cytochrom_B_C"/>
    <property type="match status" value="1"/>
</dbReference>
<dbReference type="Pfam" id="PF00033">
    <property type="entry name" value="Cytochrome_B"/>
    <property type="match status" value="1"/>
</dbReference>
<dbReference type="PIRSF" id="PIRSF038885">
    <property type="entry name" value="COB"/>
    <property type="match status" value="1"/>
</dbReference>
<dbReference type="SUPFAM" id="SSF81648">
    <property type="entry name" value="a domain/subunit of cytochrome bc1 complex (Ubiquinol-cytochrome c reductase)"/>
    <property type="match status" value="1"/>
</dbReference>
<dbReference type="SUPFAM" id="SSF81342">
    <property type="entry name" value="Transmembrane di-heme cytochromes"/>
    <property type="match status" value="1"/>
</dbReference>
<dbReference type="PROSITE" id="PS51003">
    <property type="entry name" value="CYTB_CTER"/>
    <property type="match status" value="1"/>
</dbReference>
<dbReference type="PROSITE" id="PS51002">
    <property type="entry name" value="CYTB_NTER"/>
    <property type="match status" value="1"/>
</dbReference>
<accession>Q34534</accession>
<protein>
    <recommendedName>
        <fullName>Cytochrome b</fullName>
    </recommendedName>
    <alternativeName>
        <fullName>Complex III subunit 3</fullName>
    </alternativeName>
    <alternativeName>
        <fullName>Complex III subunit III</fullName>
    </alternativeName>
    <alternativeName>
        <fullName>Cytochrome b-c1 complex subunit 3</fullName>
    </alternativeName>
    <alternativeName>
        <fullName>Ubiquinol-cytochrome-c reductase complex cytochrome b subunit</fullName>
    </alternativeName>
</protein>
<gene>
    <name type="primary">MT-CYB</name>
    <name type="synonym">COB</name>
    <name type="synonym">CYTB</name>
    <name type="synonym">MTCYB</name>
</gene>
<reference key="1">
    <citation type="journal article" date="1995" name="Emu">
        <title>Mitochondrial DNA phylogeny of the Sarus crane species group (Gruiformes: Gruidae).</title>
        <authorList>
            <person name="Krajewski C.W."/>
            <person name="Wood T.C."/>
        </authorList>
    </citation>
    <scope>NUCLEOTIDE SEQUENCE [GENOMIC DNA]</scope>
    <source>
        <strain>Sharpei</strain>
    </source>
</reference>
<reference key="2">
    <citation type="journal article" date="1994" name="Auk">
        <title>Phylogeny of cranes (Gruiformes: Gruidae) based on cytochrome-b DNA sequences.</title>
        <authorList>
            <person name="Krajewski C.W."/>
            <person name="Fetzner J.W."/>
        </authorList>
    </citation>
    <scope>NUCLEOTIDE SEQUENCE [GENOMIC DNA] OF 33-380</scope>
    <source>
        <strain>Sharpei</strain>
    </source>
</reference>
<name>CYB_ANTAI</name>
<evidence type="ECO:0000250" key="1"/>
<evidence type="ECO:0000250" key="2">
    <source>
        <dbReference type="UniProtKB" id="P00157"/>
    </source>
</evidence>
<evidence type="ECO:0000255" key="3">
    <source>
        <dbReference type="PROSITE-ProRule" id="PRU00967"/>
    </source>
</evidence>
<evidence type="ECO:0000255" key="4">
    <source>
        <dbReference type="PROSITE-ProRule" id="PRU00968"/>
    </source>
</evidence>
<sequence>MAPNLRKSHPLLKMINNSLIDLPTPSNISAWWNFGSLLGICLATQILTGLLLAAHYTADTTLAFSSVAHTCRNVQHGWLIRNLHANGASFFFICIYLHIGRGLYYGSYLYKETWNTGVILLLTLMATAFVGYVLPWGQMSFWGATVITNLFSAVPYGGQTLVEWAWGGFSVDNPTLTRFFTLHFLLPFMIMGLTLIHLTFLHESGSNNPLGIVSNCDKIPFHPYFSLKDILGFTLMLLPLMTLALFSPNLLGDPENFTPANPLVTPPHIKPEWYFLFAYAILRSIPNKLGGVLALAASVLILFLAPLLHKSKQRTMTFRPFSQLLFWTLAANLLILTWVGSQPVEHPFIIIGQLASLTYFTILLILFPIIGALENKMLNY</sequence>
<feature type="chain" id="PRO_0000061012" description="Cytochrome b">
    <location>
        <begin position="1"/>
        <end position="380"/>
    </location>
</feature>
<feature type="transmembrane region" description="Helical" evidence="2">
    <location>
        <begin position="34"/>
        <end position="54"/>
    </location>
</feature>
<feature type="transmembrane region" description="Helical" evidence="2">
    <location>
        <begin position="78"/>
        <end position="99"/>
    </location>
</feature>
<feature type="transmembrane region" description="Helical" evidence="2">
    <location>
        <begin position="114"/>
        <end position="134"/>
    </location>
</feature>
<feature type="transmembrane region" description="Helical" evidence="2">
    <location>
        <begin position="179"/>
        <end position="199"/>
    </location>
</feature>
<feature type="transmembrane region" description="Helical" evidence="2">
    <location>
        <begin position="227"/>
        <end position="247"/>
    </location>
</feature>
<feature type="transmembrane region" description="Helical" evidence="2">
    <location>
        <begin position="289"/>
        <end position="309"/>
    </location>
</feature>
<feature type="transmembrane region" description="Helical" evidence="2">
    <location>
        <begin position="321"/>
        <end position="341"/>
    </location>
</feature>
<feature type="transmembrane region" description="Helical" evidence="2">
    <location>
        <begin position="348"/>
        <end position="368"/>
    </location>
</feature>
<feature type="binding site" description="axial binding residue" evidence="2">
    <location>
        <position position="84"/>
    </location>
    <ligand>
        <name>heme b</name>
        <dbReference type="ChEBI" id="CHEBI:60344"/>
        <label>b562</label>
    </ligand>
    <ligandPart>
        <name>Fe</name>
        <dbReference type="ChEBI" id="CHEBI:18248"/>
    </ligandPart>
</feature>
<feature type="binding site" description="axial binding residue" evidence="2">
    <location>
        <position position="98"/>
    </location>
    <ligand>
        <name>heme b</name>
        <dbReference type="ChEBI" id="CHEBI:60344"/>
        <label>b566</label>
    </ligand>
    <ligandPart>
        <name>Fe</name>
        <dbReference type="ChEBI" id="CHEBI:18248"/>
    </ligandPart>
</feature>
<feature type="binding site" description="axial binding residue" evidence="2">
    <location>
        <position position="183"/>
    </location>
    <ligand>
        <name>heme b</name>
        <dbReference type="ChEBI" id="CHEBI:60344"/>
        <label>b562</label>
    </ligand>
    <ligandPart>
        <name>Fe</name>
        <dbReference type="ChEBI" id="CHEBI:18248"/>
    </ligandPart>
</feature>
<feature type="binding site" description="axial binding residue" evidence="2">
    <location>
        <position position="197"/>
    </location>
    <ligand>
        <name>heme b</name>
        <dbReference type="ChEBI" id="CHEBI:60344"/>
        <label>b566</label>
    </ligand>
    <ligandPart>
        <name>Fe</name>
        <dbReference type="ChEBI" id="CHEBI:18248"/>
    </ligandPart>
</feature>
<feature type="binding site" evidence="2">
    <location>
        <position position="202"/>
    </location>
    <ligand>
        <name>a ubiquinone</name>
        <dbReference type="ChEBI" id="CHEBI:16389"/>
    </ligand>
</feature>
<organism>
    <name type="scientific">Antigone antigone</name>
    <name type="common">Sarus crane</name>
    <name type="synonym">Grus antigone</name>
    <dbReference type="NCBI Taxonomy" id="2717063"/>
    <lineage>
        <taxon>Eukaryota</taxon>
        <taxon>Metazoa</taxon>
        <taxon>Chordata</taxon>
        <taxon>Craniata</taxon>
        <taxon>Vertebrata</taxon>
        <taxon>Euteleostomi</taxon>
        <taxon>Archelosauria</taxon>
        <taxon>Archosauria</taxon>
        <taxon>Dinosauria</taxon>
        <taxon>Saurischia</taxon>
        <taxon>Theropoda</taxon>
        <taxon>Coelurosauria</taxon>
        <taxon>Aves</taxon>
        <taxon>Neognathae</taxon>
        <taxon>Neoaves</taxon>
        <taxon>Gruiformes</taxon>
        <taxon>Gruidae</taxon>
        <taxon>Antigone</taxon>
    </lineage>
</organism>